<gene>
    <name evidence="1" type="primary">arc</name>
    <name type="ordered locus">BDP_0751</name>
</gene>
<proteinExistence type="inferred from homology"/>
<evidence type="ECO:0000255" key="1">
    <source>
        <dbReference type="HAMAP-Rule" id="MF_02112"/>
    </source>
</evidence>
<accession>D2Q9C6</accession>
<name>ARC_BIFDB</name>
<comment type="subunit">
    <text evidence="1">Homohexamer. Assembles into a hexameric ring structure.</text>
</comment>
<comment type="similarity">
    <text evidence="1">Belongs to the AAA ATPase family.</text>
</comment>
<dbReference type="EMBL" id="CP001750">
    <property type="protein sequence ID" value="ADB09412.1"/>
    <property type="molecule type" value="Genomic_DNA"/>
</dbReference>
<dbReference type="RefSeq" id="WP_003840824.1">
    <property type="nucleotide sequence ID" value="NC_013714.1"/>
</dbReference>
<dbReference type="SMR" id="D2Q9C6"/>
<dbReference type="STRING" id="401473.BDP_0751"/>
<dbReference type="GeneID" id="31605969"/>
<dbReference type="KEGG" id="bde:BDP_0751"/>
<dbReference type="eggNOG" id="COG1222">
    <property type="taxonomic scope" value="Bacteria"/>
</dbReference>
<dbReference type="HOGENOM" id="CLU_036054_0_0_11"/>
<dbReference type="Proteomes" id="UP000008693">
    <property type="component" value="Chromosome"/>
</dbReference>
<dbReference type="GO" id="GO:0000502">
    <property type="term" value="C:proteasome complex"/>
    <property type="evidence" value="ECO:0007669"/>
    <property type="project" value="InterPro"/>
</dbReference>
<dbReference type="GO" id="GO:0005524">
    <property type="term" value="F:ATP binding"/>
    <property type="evidence" value="ECO:0007669"/>
    <property type="project" value="UniProtKB-UniRule"/>
</dbReference>
<dbReference type="GO" id="GO:0016887">
    <property type="term" value="F:ATP hydrolysis activity"/>
    <property type="evidence" value="ECO:0007669"/>
    <property type="project" value="UniProtKB-UniRule"/>
</dbReference>
<dbReference type="GO" id="GO:0019941">
    <property type="term" value="P:modification-dependent protein catabolic process"/>
    <property type="evidence" value="ECO:0007669"/>
    <property type="project" value="InterPro"/>
</dbReference>
<dbReference type="GO" id="GO:0010498">
    <property type="term" value="P:proteasomal protein catabolic process"/>
    <property type="evidence" value="ECO:0007669"/>
    <property type="project" value="InterPro"/>
</dbReference>
<dbReference type="FunFam" id="3.40.50.300:FF:001025">
    <property type="entry name" value="ATPase family, AAA domain-containing 2B"/>
    <property type="match status" value="1"/>
</dbReference>
<dbReference type="Gene3D" id="1.10.8.60">
    <property type="match status" value="1"/>
</dbReference>
<dbReference type="Gene3D" id="2.40.50.140">
    <property type="entry name" value="Nucleic acid-binding proteins"/>
    <property type="match status" value="2"/>
</dbReference>
<dbReference type="Gene3D" id="3.40.50.300">
    <property type="entry name" value="P-loop containing nucleotide triphosphate hydrolases"/>
    <property type="match status" value="1"/>
</dbReference>
<dbReference type="HAMAP" id="MF_02112">
    <property type="entry name" value="ARC_ATPase"/>
    <property type="match status" value="1"/>
</dbReference>
<dbReference type="InterPro" id="IPR003593">
    <property type="entry name" value="AAA+_ATPase"/>
</dbReference>
<dbReference type="InterPro" id="IPR050168">
    <property type="entry name" value="AAA_ATPase_domain"/>
</dbReference>
<dbReference type="InterPro" id="IPR003959">
    <property type="entry name" value="ATPase_AAA_core"/>
</dbReference>
<dbReference type="InterPro" id="IPR003960">
    <property type="entry name" value="ATPase_AAA_CS"/>
</dbReference>
<dbReference type="InterPro" id="IPR012340">
    <property type="entry name" value="NA-bd_OB-fold"/>
</dbReference>
<dbReference type="InterPro" id="IPR027417">
    <property type="entry name" value="P-loop_NTPase"/>
</dbReference>
<dbReference type="InterPro" id="IPR032501">
    <property type="entry name" value="Prot_ATP_ID_OB_2nd"/>
</dbReference>
<dbReference type="InterPro" id="IPR041626">
    <property type="entry name" value="Prot_ATP_ID_OB_N"/>
</dbReference>
<dbReference type="InterPro" id="IPR022482">
    <property type="entry name" value="Proteasome_ATPase"/>
</dbReference>
<dbReference type="NCBIfam" id="TIGR03689">
    <property type="entry name" value="pup_AAA"/>
    <property type="match status" value="1"/>
</dbReference>
<dbReference type="PANTHER" id="PTHR23077">
    <property type="entry name" value="AAA-FAMILY ATPASE"/>
    <property type="match status" value="1"/>
</dbReference>
<dbReference type="PANTHER" id="PTHR23077:SF144">
    <property type="entry name" value="PROTEASOME-ASSOCIATED ATPASE"/>
    <property type="match status" value="1"/>
</dbReference>
<dbReference type="Pfam" id="PF00004">
    <property type="entry name" value="AAA"/>
    <property type="match status" value="1"/>
</dbReference>
<dbReference type="Pfam" id="PF16450">
    <property type="entry name" value="Prot_ATP_ID_OB_C"/>
    <property type="match status" value="1"/>
</dbReference>
<dbReference type="Pfam" id="PF17758">
    <property type="entry name" value="Prot_ATP_ID_OB_N"/>
    <property type="match status" value="1"/>
</dbReference>
<dbReference type="SMART" id="SM00382">
    <property type="entry name" value="AAA"/>
    <property type="match status" value="1"/>
</dbReference>
<dbReference type="SUPFAM" id="SSF52540">
    <property type="entry name" value="P-loop containing nucleoside triphosphate hydrolases"/>
    <property type="match status" value="1"/>
</dbReference>
<dbReference type="PROSITE" id="PS00674">
    <property type="entry name" value="AAA"/>
    <property type="match status" value="1"/>
</dbReference>
<sequence>MGILDGESKKARVGMERQDERLRSLSEANDRLMAKNHALAKALTRATQELTKAKAQLNQLAGPPMTFATMIRVHAANTDEQGVQHASAEVISGTRRMIVPVAANVQASRLEAGRTVLLNENMVIVDQHDTDTLGSVRTVRQVLDDGRLLVADSGGNVTLVRRAGTLAKENVNTGDRVSVDSSVRFALTLIPVEDDADLVLEETPDVTFDDIGGLDEQIERIRDAVQMPFLHRELFERYDLKPPKGVLLYGPPGNGKTLIAKAVANALAEGSGAGSGVFLSVKGPELLNKFVGESERLIRMIFRRARERAADGRPVIVFIDEMDSLLRTRGSGVSSDVETTIVPQFLSELDGVESLDNVMVIGASNRIDMIDPAVLRPGRLDVKIRVERPKAKQAEQIIRHYLTDDLPLTPGIEAKALTSVLVADIYAVSEHRHLCDVCDEHGQWSPVYLADVVSGAVLKNVVDRAKTKAVKISIESAEPAAIGVNLLAKAVQEEFEETRDAVLDADPVQWSRINGFEAGHVTRIRPTAQ</sequence>
<feature type="chain" id="PRO_0000396968" description="AAA ATPase forming ring-shaped complexes">
    <location>
        <begin position="1"/>
        <end position="529"/>
    </location>
</feature>
<feature type="coiled-coil region" evidence="1">
    <location>
        <begin position="15"/>
        <end position="62"/>
    </location>
</feature>
<feature type="binding site" evidence="1">
    <location>
        <begin position="253"/>
        <end position="258"/>
    </location>
    <ligand>
        <name>ATP</name>
        <dbReference type="ChEBI" id="CHEBI:30616"/>
    </ligand>
</feature>
<keyword id="KW-0067">ATP-binding</keyword>
<keyword id="KW-0175">Coiled coil</keyword>
<keyword id="KW-0547">Nucleotide-binding</keyword>
<keyword id="KW-1185">Reference proteome</keyword>
<reference key="1">
    <citation type="journal article" date="2009" name="PLoS Genet.">
        <title>The Bifidobacterium dentium Bd1 genome sequence reflects its genetic adaptation to the human oral cavity.</title>
        <authorList>
            <person name="Ventura M."/>
            <person name="Turroni F."/>
            <person name="Zomer A."/>
            <person name="Foroni E."/>
            <person name="Giubellini V."/>
            <person name="Bottacini F."/>
            <person name="Canchaya C."/>
            <person name="Claesson M.J."/>
            <person name="He F."/>
            <person name="Mantzourani M."/>
            <person name="Mulas L."/>
            <person name="Ferrarini A."/>
            <person name="Gao B."/>
            <person name="Delledonne M."/>
            <person name="Henrissat B."/>
            <person name="Coutinho P."/>
            <person name="Oggioni M."/>
            <person name="Gupta R.S."/>
            <person name="Zhang Z."/>
            <person name="Beighton D."/>
            <person name="Fitzgerald G.F."/>
            <person name="O'Toole P.W."/>
            <person name="van Sinderen D."/>
        </authorList>
    </citation>
    <scope>NUCLEOTIDE SEQUENCE [LARGE SCALE GENOMIC DNA]</scope>
    <source>
        <strain>ATCC 27534 / DSM 20436 / JCM 1195 / Bd1</strain>
    </source>
</reference>
<organism>
    <name type="scientific">Bifidobacterium dentium (strain ATCC 27534 / DSM 20436 / JCM 1195 / Bd1)</name>
    <dbReference type="NCBI Taxonomy" id="401473"/>
    <lineage>
        <taxon>Bacteria</taxon>
        <taxon>Bacillati</taxon>
        <taxon>Actinomycetota</taxon>
        <taxon>Actinomycetes</taxon>
        <taxon>Bifidobacteriales</taxon>
        <taxon>Bifidobacteriaceae</taxon>
        <taxon>Bifidobacterium</taxon>
    </lineage>
</organism>
<protein>
    <recommendedName>
        <fullName evidence="1">AAA ATPase forming ring-shaped complexes</fullName>
        <shortName evidence="1">ARC</shortName>
    </recommendedName>
</protein>